<organism>
    <name type="scientific">Vibrio parahaemolyticus serotype O3:K6 (strain RIMD 2210633)</name>
    <dbReference type="NCBI Taxonomy" id="223926"/>
    <lineage>
        <taxon>Bacteria</taxon>
        <taxon>Pseudomonadati</taxon>
        <taxon>Pseudomonadota</taxon>
        <taxon>Gammaproteobacteria</taxon>
        <taxon>Vibrionales</taxon>
        <taxon>Vibrionaceae</taxon>
        <taxon>Vibrio</taxon>
    </lineage>
</organism>
<dbReference type="EMBL" id="BA000031">
    <property type="protein sequence ID" value="BAC59314.1"/>
    <property type="molecule type" value="Genomic_DNA"/>
</dbReference>
<dbReference type="RefSeq" id="NP_797430.1">
    <property type="nucleotide sequence ID" value="NC_004603.1"/>
</dbReference>
<dbReference type="RefSeq" id="WP_005486097.1">
    <property type="nucleotide sequence ID" value="NC_004603.1"/>
</dbReference>
<dbReference type="SMR" id="Q87QU8"/>
<dbReference type="GeneID" id="1188555"/>
<dbReference type="KEGG" id="vpa:VP1051"/>
<dbReference type="PATRIC" id="fig|223926.6.peg.995"/>
<dbReference type="eggNOG" id="COG0632">
    <property type="taxonomic scope" value="Bacteria"/>
</dbReference>
<dbReference type="HOGENOM" id="CLU_087936_0_0_6"/>
<dbReference type="Proteomes" id="UP000002493">
    <property type="component" value="Chromosome 1"/>
</dbReference>
<dbReference type="GO" id="GO:0005737">
    <property type="term" value="C:cytoplasm"/>
    <property type="evidence" value="ECO:0007669"/>
    <property type="project" value="UniProtKB-SubCell"/>
</dbReference>
<dbReference type="GO" id="GO:0009379">
    <property type="term" value="C:Holliday junction helicase complex"/>
    <property type="evidence" value="ECO:0007669"/>
    <property type="project" value="InterPro"/>
</dbReference>
<dbReference type="GO" id="GO:0048476">
    <property type="term" value="C:Holliday junction resolvase complex"/>
    <property type="evidence" value="ECO:0007669"/>
    <property type="project" value="UniProtKB-UniRule"/>
</dbReference>
<dbReference type="GO" id="GO:0005524">
    <property type="term" value="F:ATP binding"/>
    <property type="evidence" value="ECO:0007669"/>
    <property type="project" value="InterPro"/>
</dbReference>
<dbReference type="GO" id="GO:0000400">
    <property type="term" value="F:four-way junction DNA binding"/>
    <property type="evidence" value="ECO:0007669"/>
    <property type="project" value="UniProtKB-UniRule"/>
</dbReference>
<dbReference type="GO" id="GO:0009378">
    <property type="term" value="F:four-way junction helicase activity"/>
    <property type="evidence" value="ECO:0007669"/>
    <property type="project" value="InterPro"/>
</dbReference>
<dbReference type="GO" id="GO:0006310">
    <property type="term" value="P:DNA recombination"/>
    <property type="evidence" value="ECO:0007669"/>
    <property type="project" value="UniProtKB-UniRule"/>
</dbReference>
<dbReference type="GO" id="GO:0006281">
    <property type="term" value="P:DNA repair"/>
    <property type="evidence" value="ECO:0007669"/>
    <property type="project" value="UniProtKB-UniRule"/>
</dbReference>
<dbReference type="CDD" id="cd14332">
    <property type="entry name" value="UBA_RuvA_C"/>
    <property type="match status" value="1"/>
</dbReference>
<dbReference type="FunFam" id="1.10.150.20:FF:000012">
    <property type="entry name" value="Holliday junction ATP-dependent DNA helicase RuvA"/>
    <property type="match status" value="1"/>
</dbReference>
<dbReference type="FunFam" id="1.10.8.10:FF:000008">
    <property type="entry name" value="Holliday junction ATP-dependent DNA helicase RuvA"/>
    <property type="match status" value="1"/>
</dbReference>
<dbReference type="FunFam" id="2.40.50.140:FF:000083">
    <property type="entry name" value="Holliday junction ATP-dependent DNA helicase RuvA"/>
    <property type="match status" value="1"/>
</dbReference>
<dbReference type="Gene3D" id="1.10.150.20">
    <property type="entry name" value="5' to 3' exonuclease, C-terminal subdomain"/>
    <property type="match status" value="1"/>
</dbReference>
<dbReference type="Gene3D" id="1.10.8.10">
    <property type="entry name" value="DNA helicase RuvA subunit, C-terminal domain"/>
    <property type="match status" value="1"/>
</dbReference>
<dbReference type="Gene3D" id="2.40.50.140">
    <property type="entry name" value="Nucleic acid-binding proteins"/>
    <property type="match status" value="1"/>
</dbReference>
<dbReference type="HAMAP" id="MF_00031">
    <property type="entry name" value="DNA_HJ_migration_RuvA"/>
    <property type="match status" value="1"/>
</dbReference>
<dbReference type="InterPro" id="IPR013849">
    <property type="entry name" value="DNA_helicase_Holl-junc_RuvA_I"/>
</dbReference>
<dbReference type="InterPro" id="IPR003583">
    <property type="entry name" value="Hlx-hairpin-Hlx_DNA-bd_motif"/>
</dbReference>
<dbReference type="InterPro" id="IPR012340">
    <property type="entry name" value="NA-bd_OB-fold"/>
</dbReference>
<dbReference type="InterPro" id="IPR000085">
    <property type="entry name" value="RuvA"/>
</dbReference>
<dbReference type="InterPro" id="IPR010994">
    <property type="entry name" value="RuvA_2-like"/>
</dbReference>
<dbReference type="InterPro" id="IPR011114">
    <property type="entry name" value="RuvA_C"/>
</dbReference>
<dbReference type="InterPro" id="IPR036267">
    <property type="entry name" value="RuvA_C_sf"/>
</dbReference>
<dbReference type="NCBIfam" id="TIGR00084">
    <property type="entry name" value="ruvA"/>
    <property type="match status" value="1"/>
</dbReference>
<dbReference type="Pfam" id="PF14520">
    <property type="entry name" value="HHH_5"/>
    <property type="match status" value="1"/>
</dbReference>
<dbReference type="Pfam" id="PF07499">
    <property type="entry name" value="RuvA_C"/>
    <property type="match status" value="1"/>
</dbReference>
<dbReference type="Pfam" id="PF01330">
    <property type="entry name" value="RuvA_N"/>
    <property type="match status" value="1"/>
</dbReference>
<dbReference type="SMART" id="SM00278">
    <property type="entry name" value="HhH1"/>
    <property type="match status" value="2"/>
</dbReference>
<dbReference type="SUPFAM" id="SSF46929">
    <property type="entry name" value="DNA helicase RuvA subunit, C-terminal domain"/>
    <property type="match status" value="1"/>
</dbReference>
<dbReference type="SUPFAM" id="SSF50249">
    <property type="entry name" value="Nucleic acid-binding proteins"/>
    <property type="match status" value="1"/>
</dbReference>
<dbReference type="SUPFAM" id="SSF47781">
    <property type="entry name" value="RuvA domain 2-like"/>
    <property type="match status" value="1"/>
</dbReference>
<keyword id="KW-0963">Cytoplasm</keyword>
<keyword id="KW-0227">DNA damage</keyword>
<keyword id="KW-0233">DNA recombination</keyword>
<keyword id="KW-0234">DNA repair</keyword>
<keyword id="KW-0238">DNA-binding</keyword>
<gene>
    <name evidence="1" type="primary">ruvA</name>
    <name type="ordered locus">VP1051</name>
</gene>
<protein>
    <recommendedName>
        <fullName evidence="1">Holliday junction branch migration complex subunit RuvA</fullName>
    </recommendedName>
</protein>
<sequence length="204" mass="22123">MIGRLRGILLEKQPPEVLIEVNGIGYEVQMPMSCFYELPNIGEEAIIYTHFVVREDAQLLYGFNTVKERALFREVIKANGVGPKLGLGILSGMTASQFVSCVEREDVSTLVKLPGVGKKTAERLVVEMKDRLKGWGAGDLFTPFTDAAPTDSAAASSNSAEEEAVSALLALGYKPTQASKVVSQIAKPDMSSEQLIREALKSMV</sequence>
<feature type="chain" id="PRO_0000094708" description="Holliday junction branch migration complex subunit RuvA">
    <location>
        <begin position="1"/>
        <end position="204"/>
    </location>
</feature>
<feature type="region of interest" description="Domain I" evidence="1">
    <location>
        <begin position="1"/>
        <end position="64"/>
    </location>
</feature>
<feature type="region of interest" description="Domain II" evidence="1">
    <location>
        <begin position="65"/>
        <end position="143"/>
    </location>
</feature>
<feature type="region of interest" description="Flexible linker" evidence="1">
    <location>
        <begin position="144"/>
        <end position="155"/>
    </location>
</feature>
<feature type="region of interest" description="Domain III" evidence="1">
    <location>
        <begin position="156"/>
        <end position="204"/>
    </location>
</feature>
<proteinExistence type="inferred from homology"/>
<evidence type="ECO:0000255" key="1">
    <source>
        <dbReference type="HAMAP-Rule" id="MF_00031"/>
    </source>
</evidence>
<reference key="1">
    <citation type="journal article" date="2003" name="Lancet">
        <title>Genome sequence of Vibrio parahaemolyticus: a pathogenic mechanism distinct from that of V. cholerae.</title>
        <authorList>
            <person name="Makino K."/>
            <person name="Oshima K."/>
            <person name="Kurokawa K."/>
            <person name="Yokoyama K."/>
            <person name="Uda T."/>
            <person name="Tagomori K."/>
            <person name="Iijima Y."/>
            <person name="Najima M."/>
            <person name="Nakano M."/>
            <person name="Yamashita A."/>
            <person name="Kubota Y."/>
            <person name="Kimura S."/>
            <person name="Yasunaga T."/>
            <person name="Honda T."/>
            <person name="Shinagawa H."/>
            <person name="Hattori M."/>
            <person name="Iida T."/>
        </authorList>
    </citation>
    <scope>NUCLEOTIDE SEQUENCE [LARGE SCALE GENOMIC DNA]</scope>
    <source>
        <strain>RIMD 2210633</strain>
    </source>
</reference>
<comment type="function">
    <text evidence="1">The RuvA-RuvB-RuvC complex processes Holliday junction (HJ) DNA during genetic recombination and DNA repair, while the RuvA-RuvB complex plays an important role in the rescue of blocked DNA replication forks via replication fork reversal (RFR). RuvA specifically binds to HJ cruciform DNA, conferring on it an open structure. The RuvB hexamer acts as an ATP-dependent pump, pulling dsDNA into and through the RuvAB complex. HJ branch migration allows RuvC to scan DNA until it finds its consensus sequence, where it cleaves and resolves the cruciform DNA.</text>
</comment>
<comment type="subunit">
    <text evidence="1">Homotetramer. Forms an RuvA(8)-RuvB(12)-Holliday junction (HJ) complex. HJ DNA is sandwiched between 2 RuvA tetramers; dsDNA enters through RuvA and exits via RuvB. An RuvB hexamer assembles on each DNA strand where it exits the tetramer. Each RuvB hexamer is contacted by two RuvA subunits (via domain III) on 2 adjacent RuvB subunits; this complex drives branch migration. In the full resolvosome a probable DNA-RuvA(4)-RuvB(12)-RuvC(2) complex forms which resolves the HJ.</text>
</comment>
<comment type="subcellular location">
    <subcellularLocation>
        <location evidence="1">Cytoplasm</location>
    </subcellularLocation>
</comment>
<comment type="domain">
    <text evidence="1">Has three domains with a flexible linker between the domains II and III and assumes an 'L' shape. Domain III is highly mobile and contacts RuvB.</text>
</comment>
<comment type="similarity">
    <text evidence="1">Belongs to the RuvA family.</text>
</comment>
<name>RUVA_VIBPA</name>
<accession>Q87QU8</accession>